<reference evidence="6" key="1">
    <citation type="journal article" date="2002" name="Genome Biol.">
        <title>Assessing the impact of comparative genomic sequence data on the functional annotation of the Drosophila genome.</title>
        <authorList>
            <person name="Bergman C.M."/>
            <person name="Pfeiffer B.D."/>
            <person name="Rincon-Limas D.E."/>
            <person name="Hoskins R.A."/>
            <person name="Gnirke A."/>
            <person name="Mungall C.J."/>
            <person name="Wang A.M."/>
            <person name="Kronmiller B."/>
            <person name="Pacleb J.M."/>
            <person name="Park S."/>
            <person name="Stapleton M."/>
            <person name="Wan K.H."/>
            <person name="George R.A."/>
            <person name="de Jong P.J."/>
            <person name="Botas J."/>
            <person name="Rubin G.M."/>
            <person name="Celniker S.E."/>
        </authorList>
    </citation>
    <scope>NUCLEOTIDE SEQUENCE [LARGE SCALE GENOMIC DNA]</scope>
    <source>
        <strain evidence="6">Tucson 15010-1001.10</strain>
    </source>
</reference>
<reference key="2">
    <citation type="journal article" date="2007" name="Nature">
        <title>Evolution of genes and genomes on the Drosophila phylogeny.</title>
        <authorList>
            <consortium name="Drosophila 12 genomes consortium"/>
        </authorList>
    </citation>
    <scope>NUCLEOTIDE SEQUENCE [LARGE SCALE GENOMIC DNA]</scope>
    <source>
        <strain>Tucson 15010-1051.87</strain>
    </source>
</reference>
<organism>
    <name type="scientific">Drosophila virilis</name>
    <name type="common">Fruit fly</name>
    <dbReference type="NCBI Taxonomy" id="7244"/>
    <lineage>
        <taxon>Eukaryota</taxon>
        <taxon>Metazoa</taxon>
        <taxon>Ecdysozoa</taxon>
        <taxon>Arthropoda</taxon>
        <taxon>Hexapoda</taxon>
        <taxon>Insecta</taxon>
        <taxon>Pterygota</taxon>
        <taxon>Neoptera</taxon>
        <taxon>Endopterygota</taxon>
        <taxon>Diptera</taxon>
        <taxon>Brachycera</taxon>
        <taxon>Muscomorpha</taxon>
        <taxon>Ephydroidea</taxon>
        <taxon>Drosophilidae</taxon>
        <taxon>Drosophila</taxon>
    </lineage>
</organism>
<accession>Q8I190</accession>
<accession>B4MC14</accession>
<feature type="chain" id="PRO_0000285840" description="Endophilin-A">
    <location>
        <begin position="1"/>
        <end position="369"/>
    </location>
</feature>
<feature type="domain" description="BAR" evidence="4">
    <location>
        <begin position="18"/>
        <end position="248"/>
    </location>
</feature>
<feature type="domain" description="SH3" evidence="3">
    <location>
        <begin position="305"/>
        <end position="364"/>
    </location>
</feature>
<feature type="region of interest" description="Disordered" evidence="5">
    <location>
        <begin position="275"/>
        <end position="297"/>
    </location>
</feature>
<feature type="coiled-coil region" evidence="2">
    <location>
        <begin position="227"/>
        <end position="249"/>
    </location>
</feature>
<feature type="compositionally biased region" description="Low complexity" evidence="5">
    <location>
        <begin position="275"/>
        <end position="294"/>
    </location>
</feature>
<gene>
    <name evidence="1" type="primary">EndoA</name>
    <name type="ORF">GJ14546</name>
</gene>
<name>SH3G3_DROVI</name>
<proteinExistence type="inferred from homology"/>
<comment type="function">
    <text evidence="1">Required presynaptically at the neuromuscular junction. Implicated in synaptic vesicle endocytosis.</text>
</comment>
<comment type="subcellular location">
    <subcellularLocation>
        <location evidence="1">Cytoplasm</location>
    </subcellularLocation>
    <subcellularLocation>
        <location evidence="1">Membrane</location>
        <topology evidence="1">Peripheral membrane protein</topology>
    </subcellularLocation>
    <text evidence="1">Associated with internal membranes. Expressed presynaptically at NMJs.</text>
</comment>
<comment type="similarity">
    <text evidence="2">Belongs to the endophilin family.</text>
</comment>
<evidence type="ECO:0000250" key="1">
    <source>
        <dbReference type="UniProtKB" id="Q8T390"/>
    </source>
</evidence>
<evidence type="ECO:0000255" key="2"/>
<evidence type="ECO:0000255" key="3">
    <source>
        <dbReference type="PROSITE-ProRule" id="PRU00192"/>
    </source>
</evidence>
<evidence type="ECO:0000255" key="4">
    <source>
        <dbReference type="PROSITE-ProRule" id="PRU00361"/>
    </source>
</evidence>
<evidence type="ECO:0000256" key="5">
    <source>
        <dbReference type="SAM" id="MobiDB-lite"/>
    </source>
</evidence>
<evidence type="ECO:0000312" key="6">
    <source>
        <dbReference type="EMBL" id="AAO01081.1"/>
    </source>
</evidence>
<protein>
    <recommendedName>
        <fullName>Endophilin-A</fullName>
    </recommendedName>
    <alternativeName>
        <fullName>SH3 domain-containing GRB2-like protein</fullName>
    </alternativeName>
</protein>
<keyword id="KW-0175">Coiled coil</keyword>
<keyword id="KW-0963">Cytoplasm</keyword>
<keyword id="KW-0254">Endocytosis</keyword>
<keyword id="KW-0472">Membrane</keyword>
<keyword id="KW-0597">Phosphoprotein</keyword>
<keyword id="KW-1185">Reference proteome</keyword>
<keyword id="KW-0728">SH3 domain</keyword>
<dbReference type="EMBL" id="AY190955">
    <property type="protein sequence ID" value="AAO01081.1"/>
    <property type="molecule type" value="Genomic_DNA"/>
</dbReference>
<dbReference type="EMBL" id="CH940656">
    <property type="protein sequence ID" value="EDW58635.1"/>
    <property type="molecule type" value="Genomic_DNA"/>
</dbReference>
<dbReference type="RefSeq" id="XP_002058667.1">
    <property type="nucleotide sequence ID" value="XM_002058631.2"/>
</dbReference>
<dbReference type="RefSeq" id="XP_015024958.1">
    <property type="nucleotide sequence ID" value="XM_015169472.1"/>
</dbReference>
<dbReference type="RefSeq" id="XP_015024959.1">
    <property type="nucleotide sequence ID" value="XM_015169473.3"/>
</dbReference>
<dbReference type="RefSeq" id="XP_015024960.1">
    <property type="nucleotide sequence ID" value="XM_015169474.1"/>
</dbReference>
<dbReference type="RefSeq" id="XP_015024961.1">
    <property type="nucleotide sequence ID" value="XM_015169475.3"/>
</dbReference>
<dbReference type="SMR" id="Q8I190"/>
<dbReference type="FunCoup" id="Q8I190">
    <property type="interactions" value="729"/>
</dbReference>
<dbReference type="STRING" id="7244.Q8I190"/>
<dbReference type="EnsemblMetazoa" id="FBtr0230471">
    <property type="protein sequence ID" value="FBpp0228963"/>
    <property type="gene ID" value="FBgn0086436"/>
</dbReference>
<dbReference type="EnsemblMetazoa" id="FBtr0433697">
    <property type="protein sequence ID" value="FBpp0390816"/>
    <property type="gene ID" value="FBgn0086436"/>
</dbReference>
<dbReference type="EnsemblMetazoa" id="FBtr0434069">
    <property type="protein sequence ID" value="FBpp0391160"/>
    <property type="gene ID" value="FBgn0086436"/>
</dbReference>
<dbReference type="EnsemblMetazoa" id="FBtr0439285">
    <property type="protein sequence ID" value="FBpp0395970"/>
    <property type="gene ID" value="FBgn0086436"/>
</dbReference>
<dbReference type="EnsemblMetazoa" id="FBtr0439486">
    <property type="protein sequence ID" value="FBpp0396154"/>
    <property type="gene ID" value="FBgn0086436"/>
</dbReference>
<dbReference type="EnsemblMetazoa" id="XM_015169473.2">
    <property type="protein sequence ID" value="XP_015024959.1"/>
    <property type="gene ID" value="LOC6635107"/>
</dbReference>
<dbReference type="EnsemblMetazoa" id="XM_015169475.2">
    <property type="protein sequence ID" value="XP_015024961.1"/>
    <property type="gene ID" value="LOC6635107"/>
</dbReference>
<dbReference type="GeneID" id="6635107"/>
<dbReference type="KEGG" id="dvi:6635107"/>
<dbReference type="CTD" id="42265"/>
<dbReference type="eggNOG" id="KOG1118">
    <property type="taxonomic scope" value="Eukaryota"/>
</dbReference>
<dbReference type="HOGENOM" id="CLU_047887_0_0_1"/>
<dbReference type="InParanoid" id="Q8I190"/>
<dbReference type="OMA" id="MFPANYC"/>
<dbReference type="OrthoDB" id="443981at2759"/>
<dbReference type="PhylomeDB" id="Q8I190"/>
<dbReference type="Proteomes" id="UP000008792">
    <property type="component" value="Unassembled WGS sequence"/>
</dbReference>
<dbReference type="GO" id="GO:0005737">
    <property type="term" value="C:cytoplasm"/>
    <property type="evidence" value="ECO:0000250"/>
    <property type="project" value="UniProtKB"/>
</dbReference>
<dbReference type="GO" id="GO:0005829">
    <property type="term" value="C:cytosol"/>
    <property type="evidence" value="ECO:0007669"/>
    <property type="project" value="EnsemblMetazoa"/>
</dbReference>
<dbReference type="GO" id="GO:0098978">
    <property type="term" value="C:glutamatergic synapse"/>
    <property type="evidence" value="ECO:0007669"/>
    <property type="project" value="TreeGrafter"/>
</dbReference>
<dbReference type="GO" id="GO:0016020">
    <property type="term" value="C:membrane"/>
    <property type="evidence" value="ECO:0007669"/>
    <property type="project" value="UniProtKB-SubCell"/>
</dbReference>
<dbReference type="GO" id="GO:0061174">
    <property type="term" value="C:type I terminal bouton"/>
    <property type="evidence" value="ECO:0007669"/>
    <property type="project" value="EnsemblMetazoa"/>
</dbReference>
<dbReference type="GO" id="GO:0005543">
    <property type="term" value="F:phospholipid binding"/>
    <property type="evidence" value="ECO:0007669"/>
    <property type="project" value="EnsemblMetazoa"/>
</dbReference>
<dbReference type="GO" id="GO:0000045">
    <property type="term" value="P:autophagosome assembly"/>
    <property type="evidence" value="ECO:0007669"/>
    <property type="project" value="EnsemblMetazoa"/>
</dbReference>
<dbReference type="GO" id="GO:0009267">
    <property type="term" value="P:cellular response to starvation"/>
    <property type="evidence" value="ECO:0007669"/>
    <property type="project" value="EnsemblMetazoa"/>
</dbReference>
<dbReference type="GO" id="GO:0150007">
    <property type="term" value="P:clathrin-dependent synaptic vesicle endocytosis"/>
    <property type="evidence" value="ECO:0007669"/>
    <property type="project" value="EnsemblMetazoa"/>
</dbReference>
<dbReference type="GO" id="GO:0097753">
    <property type="term" value="P:membrane bending"/>
    <property type="evidence" value="ECO:0007669"/>
    <property type="project" value="EnsemblMetazoa"/>
</dbReference>
<dbReference type="GO" id="GO:0097749">
    <property type="term" value="P:membrane tubulation"/>
    <property type="evidence" value="ECO:0007669"/>
    <property type="project" value="EnsemblMetazoa"/>
</dbReference>
<dbReference type="GO" id="GO:0097320">
    <property type="term" value="P:plasma membrane tubulation"/>
    <property type="evidence" value="ECO:0007669"/>
    <property type="project" value="EnsemblMetazoa"/>
</dbReference>
<dbReference type="GO" id="GO:0050803">
    <property type="term" value="P:regulation of synapse structure or activity"/>
    <property type="evidence" value="ECO:0000250"/>
    <property type="project" value="UniProtKB"/>
</dbReference>
<dbReference type="GO" id="GO:0048488">
    <property type="term" value="P:synaptic vesicle endocytosis"/>
    <property type="evidence" value="ECO:0000250"/>
    <property type="project" value="UniProtKB"/>
</dbReference>
<dbReference type="GO" id="GO:0016191">
    <property type="term" value="P:synaptic vesicle uncoating"/>
    <property type="evidence" value="ECO:0007669"/>
    <property type="project" value="TreeGrafter"/>
</dbReference>
<dbReference type="CDD" id="cd07592">
    <property type="entry name" value="BAR_Endophilin_A"/>
    <property type="match status" value="1"/>
</dbReference>
<dbReference type="CDD" id="cd11803">
    <property type="entry name" value="SH3_Endophilin_A"/>
    <property type="match status" value="1"/>
</dbReference>
<dbReference type="FunFam" id="1.20.1270.60:FF:000021">
    <property type="entry name" value="Endophilin-A2 isoform 1"/>
    <property type="match status" value="1"/>
</dbReference>
<dbReference type="FunFam" id="2.30.30.40:FF:000072">
    <property type="entry name" value="Unconventional Myosin IB"/>
    <property type="match status" value="1"/>
</dbReference>
<dbReference type="Gene3D" id="1.20.1270.60">
    <property type="entry name" value="Arfaptin homology (AH) domain/BAR domain"/>
    <property type="match status" value="1"/>
</dbReference>
<dbReference type="Gene3D" id="2.30.30.40">
    <property type="entry name" value="SH3 Domains"/>
    <property type="match status" value="1"/>
</dbReference>
<dbReference type="InterPro" id="IPR027267">
    <property type="entry name" value="AH/BAR_dom_sf"/>
</dbReference>
<dbReference type="InterPro" id="IPR004148">
    <property type="entry name" value="BAR_dom"/>
</dbReference>
<dbReference type="InterPro" id="IPR035824">
    <property type="entry name" value="Endophilin_A_SH3"/>
</dbReference>
<dbReference type="InterPro" id="IPR050384">
    <property type="entry name" value="Endophilin_SH3RF"/>
</dbReference>
<dbReference type="InterPro" id="IPR036028">
    <property type="entry name" value="SH3-like_dom_sf"/>
</dbReference>
<dbReference type="InterPro" id="IPR001452">
    <property type="entry name" value="SH3_domain"/>
</dbReference>
<dbReference type="PANTHER" id="PTHR14167:SF81">
    <property type="entry name" value="ENDOPHILIN-A"/>
    <property type="match status" value="1"/>
</dbReference>
<dbReference type="PANTHER" id="PTHR14167">
    <property type="entry name" value="SH3 DOMAIN-CONTAINING"/>
    <property type="match status" value="1"/>
</dbReference>
<dbReference type="Pfam" id="PF03114">
    <property type="entry name" value="BAR"/>
    <property type="match status" value="1"/>
</dbReference>
<dbReference type="Pfam" id="PF00018">
    <property type="entry name" value="SH3_1"/>
    <property type="match status" value="1"/>
</dbReference>
<dbReference type="PRINTS" id="PR00452">
    <property type="entry name" value="SH3DOMAIN"/>
</dbReference>
<dbReference type="PRINTS" id="PR01887">
    <property type="entry name" value="SPECTRNALPHA"/>
</dbReference>
<dbReference type="SMART" id="SM00721">
    <property type="entry name" value="BAR"/>
    <property type="match status" value="1"/>
</dbReference>
<dbReference type="SMART" id="SM00326">
    <property type="entry name" value="SH3"/>
    <property type="match status" value="1"/>
</dbReference>
<dbReference type="SUPFAM" id="SSF103657">
    <property type="entry name" value="BAR/IMD domain-like"/>
    <property type="match status" value="1"/>
</dbReference>
<dbReference type="SUPFAM" id="SSF50044">
    <property type="entry name" value="SH3-domain"/>
    <property type="match status" value="1"/>
</dbReference>
<dbReference type="PROSITE" id="PS51021">
    <property type="entry name" value="BAR"/>
    <property type="match status" value="1"/>
</dbReference>
<dbReference type="PROSITE" id="PS50002">
    <property type="entry name" value="SH3"/>
    <property type="match status" value="1"/>
</dbReference>
<sequence>MAFAGLKKQINKANQYVTEKMGGAEGTKLDLDFMDMERKTDVTVELVEELQLKTKEFLQPNPTARAKMAAVKGISKLSGQAKSNTYPQPEGLLAECMLTYGKKLGEDNSVFAQALVEFGEALKQMADVKYSLDDNIKQNFLEPLHHMQTKDLKEVMHHRKKLQGRRLDFDCKRRRQAKDDEIRGAEDKFAESLQLAQVGMFNLLENDTEHVSQLVTFAEALYDFHSQCADVLRGLQETLQEKRAEAESRPRNEFVPKTLLDLNLDGGGGGLIDDGTPSHISSSASPLPSPMRSPAKSMAVTPNRQQQPCCQALYDFDPENPGELGFKENDIITLLNRVDDNWYEGAVNGRTGYFPQSYVQVQVPLPNGN</sequence>